<gene>
    <name evidence="1" type="primary">rpsH</name>
    <name type="ordered locus">BBR47_02350</name>
</gene>
<protein>
    <recommendedName>
        <fullName evidence="1">Small ribosomal subunit protein uS8</fullName>
    </recommendedName>
    <alternativeName>
        <fullName evidence="2">30S ribosomal protein S8</fullName>
    </alternativeName>
</protein>
<evidence type="ECO:0000255" key="1">
    <source>
        <dbReference type="HAMAP-Rule" id="MF_01302"/>
    </source>
</evidence>
<evidence type="ECO:0000305" key="2"/>
<organism>
    <name type="scientific">Brevibacillus brevis (strain 47 / JCM 6285 / NBRC 100599)</name>
    <dbReference type="NCBI Taxonomy" id="358681"/>
    <lineage>
        <taxon>Bacteria</taxon>
        <taxon>Bacillati</taxon>
        <taxon>Bacillota</taxon>
        <taxon>Bacilli</taxon>
        <taxon>Bacillales</taxon>
        <taxon>Paenibacillaceae</taxon>
        <taxon>Brevibacillus</taxon>
    </lineage>
</organism>
<feature type="chain" id="PRO_1000165311" description="Small ribosomal subunit protein uS8">
    <location>
        <begin position="1"/>
        <end position="132"/>
    </location>
</feature>
<reference key="1">
    <citation type="submission" date="2005-03" db="EMBL/GenBank/DDBJ databases">
        <title>Brevibacillus brevis strain 47, complete genome.</title>
        <authorList>
            <person name="Hosoyama A."/>
            <person name="Yamada R."/>
            <person name="Hongo Y."/>
            <person name="Terui Y."/>
            <person name="Ankai A."/>
            <person name="Masuyama W."/>
            <person name="Sekiguchi M."/>
            <person name="Takeda T."/>
            <person name="Asano K."/>
            <person name="Ohji S."/>
            <person name="Ichikawa N."/>
            <person name="Narita S."/>
            <person name="Aoki N."/>
            <person name="Miura H."/>
            <person name="Matsushita S."/>
            <person name="Sekigawa T."/>
            <person name="Yamagata H."/>
            <person name="Yoshikawa H."/>
            <person name="Udaka S."/>
            <person name="Tanikawa S."/>
            <person name="Fujita N."/>
        </authorList>
    </citation>
    <scope>NUCLEOTIDE SEQUENCE [LARGE SCALE GENOMIC DNA]</scope>
    <source>
        <strain>47 / JCM 6285 / NBRC 100599</strain>
    </source>
</reference>
<sequence>MVMTDPIADMLTRIRNANMVRHEKVEIPASTIKKEIARILKEEGFIRDAEFVEDNKQGIIRVFLKYGAGNERVITGLKRISKPGLRVYAKNNEVPKVLGGLGCAIISTSTGVMTDKQARQAHVGGEVLAYIW</sequence>
<keyword id="KW-1185">Reference proteome</keyword>
<keyword id="KW-0687">Ribonucleoprotein</keyword>
<keyword id="KW-0689">Ribosomal protein</keyword>
<keyword id="KW-0694">RNA-binding</keyword>
<keyword id="KW-0699">rRNA-binding</keyword>
<accession>C0ZIJ4</accession>
<comment type="function">
    <text evidence="1">One of the primary rRNA binding proteins, it binds directly to 16S rRNA central domain where it helps coordinate assembly of the platform of the 30S subunit.</text>
</comment>
<comment type="subunit">
    <text evidence="1">Part of the 30S ribosomal subunit. Contacts proteins S5 and S12.</text>
</comment>
<comment type="similarity">
    <text evidence="1">Belongs to the universal ribosomal protein uS8 family.</text>
</comment>
<proteinExistence type="inferred from homology"/>
<dbReference type="EMBL" id="AP008955">
    <property type="protein sequence ID" value="BAH41212.1"/>
    <property type="molecule type" value="Genomic_DNA"/>
</dbReference>
<dbReference type="RefSeq" id="WP_012683992.1">
    <property type="nucleotide sequence ID" value="NC_012491.1"/>
</dbReference>
<dbReference type="SMR" id="C0ZIJ4"/>
<dbReference type="STRING" id="358681.BBR47_02350"/>
<dbReference type="KEGG" id="bbe:BBR47_02350"/>
<dbReference type="eggNOG" id="COG0096">
    <property type="taxonomic scope" value="Bacteria"/>
</dbReference>
<dbReference type="HOGENOM" id="CLU_098428_0_2_9"/>
<dbReference type="Proteomes" id="UP000001877">
    <property type="component" value="Chromosome"/>
</dbReference>
<dbReference type="GO" id="GO:1990904">
    <property type="term" value="C:ribonucleoprotein complex"/>
    <property type="evidence" value="ECO:0007669"/>
    <property type="project" value="UniProtKB-KW"/>
</dbReference>
<dbReference type="GO" id="GO:0005840">
    <property type="term" value="C:ribosome"/>
    <property type="evidence" value="ECO:0007669"/>
    <property type="project" value="UniProtKB-KW"/>
</dbReference>
<dbReference type="GO" id="GO:0019843">
    <property type="term" value="F:rRNA binding"/>
    <property type="evidence" value="ECO:0007669"/>
    <property type="project" value="UniProtKB-UniRule"/>
</dbReference>
<dbReference type="GO" id="GO:0003735">
    <property type="term" value="F:structural constituent of ribosome"/>
    <property type="evidence" value="ECO:0007669"/>
    <property type="project" value="InterPro"/>
</dbReference>
<dbReference type="GO" id="GO:0006412">
    <property type="term" value="P:translation"/>
    <property type="evidence" value="ECO:0007669"/>
    <property type="project" value="UniProtKB-UniRule"/>
</dbReference>
<dbReference type="FunFam" id="3.30.1370.30:FF:000002">
    <property type="entry name" value="30S ribosomal protein S8"/>
    <property type="match status" value="1"/>
</dbReference>
<dbReference type="FunFam" id="3.30.1490.10:FF:000001">
    <property type="entry name" value="30S ribosomal protein S8"/>
    <property type="match status" value="1"/>
</dbReference>
<dbReference type="Gene3D" id="3.30.1370.30">
    <property type="match status" value="1"/>
</dbReference>
<dbReference type="Gene3D" id="3.30.1490.10">
    <property type="match status" value="1"/>
</dbReference>
<dbReference type="HAMAP" id="MF_01302_B">
    <property type="entry name" value="Ribosomal_uS8_B"/>
    <property type="match status" value="1"/>
</dbReference>
<dbReference type="InterPro" id="IPR000630">
    <property type="entry name" value="Ribosomal_uS8"/>
</dbReference>
<dbReference type="InterPro" id="IPR047863">
    <property type="entry name" value="Ribosomal_uS8_CS"/>
</dbReference>
<dbReference type="InterPro" id="IPR035987">
    <property type="entry name" value="Ribosomal_uS8_sf"/>
</dbReference>
<dbReference type="NCBIfam" id="NF001109">
    <property type="entry name" value="PRK00136.1"/>
    <property type="match status" value="1"/>
</dbReference>
<dbReference type="PANTHER" id="PTHR11758">
    <property type="entry name" value="40S RIBOSOMAL PROTEIN S15A"/>
    <property type="match status" value="1"/>
</dbReference>
<dbReference type="Pfam" id="PF00410">
    <property type="entry name" value="Ribosomal_S8"/>
    <property type="match status" value="1"/>
</dbReference>
<dbReference type="SUPFAM" id="SSF56047">
    <property type="entry name" value="Ribosomal protein S8"/>
    <property type="match status" value="1"/>
</dbReference>
<dbReference type="PROSITE" id="PS00053">
    <property type="entry name" value="RIBOSOMAL_S8"/>
    <property type="match status" value="1"/>
</dbReference>
<name>RS8_BREBN</name>